<comment type="function">
    <text evidence="1">An accessory protein needed during the final step in the assembly of 30S ribosomal subunit, possibly for assembly of the head region. Essential for efficient processing of 16S rRNA. May be needed both before and after RbfA during the maturation of 16S rRNA. It has affinity for free ribosomal 30S subunits but not for 70S ribosomes.</text>
</comment>
<comment type="subunit">
    <text evidence="1">Binds ribosomal protein uS19.</text>
</comment>
<comment type="subcellular location">
    <subcellularLocation>
        <location evidence="1">Cytoplasm</location>
    </subcellularLocation>
</comment>
<comment type="domain">
    <text evidence="1">The PRC barrel domain binds ribosomal protein uS19.</text>
</comment>
<comment type="similarity">
    <text evidence="1">Belongs to the RimM family.</text>
</comment>
<reference key="1">
    <citation type="journal article" date="2003" name="Mol. Microbiol.">
        <title>Genome-based analysis of virulence genes in a non-biofilm-forming Staphylococcus epidermidis strain (ATCC 12228).</title>
        <authorList>
            <person name="Zhang Y.-Q."/>
            <person name="Ren S.-X."/>
            <person name="Li H.-L."/>
            <person name="Wang Y.-X."/>
            <person name="Fu G."/>
            <person name="Yang J."/>
            <person name="Qin Z.-Q."/>
            <person name="Miao Y.-G."/>
            <person name="Wang W.-Y."/>
            <person name="Chen R.-S."/>
            <person name="Shen Y."/>
            <person name="Chen Z."/>
            <person name="Yuan Z.-H."/>
            <person name="Zhao G.-P."/>
            <person name="Qu D."/>
            <person name="Danchin A."/>
            <person name="Wen Y.-M."/>
        </authorList>
    </citation>
    <scope>NUCLEOTIDE SEQUENCE [LARGE SCALE GENOMIC DNA]</scope>
    <source>
        <strain>ATCC 12228 / FDA PCI 1200</strain>
    </source>
</reference>
<feature type="chain" id="PRO_0000163357" description="Ribosome maturation factor RimM">
    <location>
        <begin position="1"/>
        <end position="167"/>
    </location>
</feature>
<feature type="domain" description="PRC barrel" evidence="1">
    <location>
        <begin position="94"/>
        <end position="165"/>
    </location>
</feature>
<evidence type="ECO:0000255" key="1">
    <source>
        <dbReference type="HAMAP-Rule" id="MF_00014"/>
    </source>
</evidence>
<name>RIMM_STAES</name>
<protein>
    <recommendedName>
        <fullName evidence="1">Ribosome maturation factor RimM</fullName>
    </recommendedName>
</protein>
<keyword id="KW-0143">Chaperone</keyword>
<keyword id="KW-0963">Cytoplasm</keyword>
<keyword id="KW-0690">Ribosome biogenesis</keyword>
<keyword id="KW-0698">rRNA processing</keyword>
<organism>
    <name type="scientific">Staphylococcus epidermidis (strain ATCC 12228 / FDA PCI 1200)</name>
    <dbReference type="NCBI Taxonomy" id="176280"/>
    <lineage>
        <taxon>Bacteria</taxon>
        <taxon>Bacillati</taxon>
        <taxon>Bacillota</taxon>
        <taxon>Bacilli</taxon>
        <taxon>Bacillales</taxon>
        <taxon>Staphylococcaceae</taxon>
        <taxon>Staphylococcus</taxon>
    </lineage>
</organism>
<gene>
    <name evidence="1" type="primary">rimM</name>
    <name type="ordered locus">SE_0914</name>
</gene>
<proteinExistence type="inferred from homology"/>
<dbReference type="EMBL" id="AE015929">
    <property type="protein sequence ID" value="AAO04511.1"/>
    <property type="molecule type" value="Genomic_DNA"/>
</dbReference>
<dbReference type="RefSeq" id="NP_764469.1">
    <property type="nucleotide sequence ID" value="NC_004461.1"/>
</dbReference>
<dbReference type="RefSeq" id="WP_001832559.1">
    <property type="nucleotide sequence ID" value="NZ_WBME01000001.1"/>
</dbReference>
<dbReference type="SMR" id="Q8CPH7"/>
<dbReference type="GeneID" id="50018948"/>
<dbReference type="KEGG" id="sep:SE_0914"/>
<dbReference type="PATRIC" id="fig|176280.10.peg.887"/>
<dbReference type="eggNOG" id="COG0806">
    <property type="taxonomic scope" value="Bacteria"/>
</dbReference>
<dbReference type="HOGENOM" id="CLU_077636_3_1_9"/>
<dbReference type="OrthoDB" id="9810331at2"/>
<dbReference type="Proteomes" id="UP000001411">
    <property type="component" value="Chromosome"/>
</dbReference>
<dbReference type="GO" id="GO:0005737">
    <property type="term" value="C:cytoplasm"/>
    <property type="evidence" value="ECO:0007669"/>
    <property type="project" value="UniProtKB-SubCell"/>
</dbReference>
<dbReference type="GO" id="GO:0005840">
    <property type="term" value="C:ribosome"/>
    <property type="evidence" value="ECO:0007669"/>
    <property type="project" value="InterPro"/>
</dbReference>
<dbReference type="GO" id="GO:0043022">
    <property type="term" value="F:ribosome binding"/>
    <property type="evidence" value="ECO:0007669"/>
    <property type="project" value="InterPro"/>
</dbReference>
<dbReference type="GO" id="GO:0042274">
    <property type="term" value="P:ribosomal small subunit biogenesis"/>
    <property type="evidence" value="ECO:0007669"/>
    <property type="project" value="UniProtKB-UniRule"/>
</dbReference>
<dbReference type="GO" id="GO:0006364">
    <property type="term" value="P:rRNA processing"/>
    <property type="evidence" value="ECO:0007669"/>
    <property type="project" value="UniProtKB-UniRule"/>
</dbReference>
<dbReference type="Gene3D" id="2.30.30.240">
    <property type="entry name" value="PRC-barrel domain"/>
    <property type="match status" value="1"/>
</dbReference>
<dbReference type="Gene3D" id="2.40.30.60">
    <property type="entry name" value="RimM"/>
    <property type="match status" value="1"/>
</dbReference>
<dbReference type="HAMAP" id="MF_00014">
    <property type="entry name" value="Ribosome_mat_RimM"/>
    <property type="match status" value="1"/>
</dbReference>
<dbReference type="InterPro" id="IPR011033">
    <property type="entry name" value="PRC_barrel-like_sf"/>
</dbReference>
<dbReference type="InterPro" id="IPR056792">
    <property type="entry name" value="PRC_RimM"/>
</dbReference>
<dbReference type="InterPro" id="IPR011961">
    <property type="entry name" value="RimM"/>
</dbReference>
<dbReference type="InterPro" id="IPR002676">
    <property type="entry name" value="RimM_N"/>
</dbReference>
<dbReference type="InterPro" id="IPR036976">
    <property type="entry name" value="RimM_N_sf"/>
</dbReference>
<dbReference type="InterPro" id="IPR009000">
    <property type="entry name" value="Transl_B-barrel_sf"/>
</dbReference>
<dbReference type="NCBIfam" id="TIGR02273">
    <property type="entry name" value="16S_RimM"/>
    <property type="match status" value="1"/>
</dbReference>
<dbReference type="PANTHER" id="PTHR33692">
    <property type="entry name" value="RIBOSOME MATURATION FACTOR RIMM"/>
    <property type="match status" value="1"/>
</dbReference>
<dbReference type="PANTHER" id="PTHR33692:SF1">
    <property type="entry name" value="RIBOSOME MATURATION FACTOR RIMM"/>
    <property type="match status" value="1"/>
</dbReference>
<dbReference type="Pfam" id="PF24986">
    <property type="entry name" value="PRC_RimM"/>
    <property type="match status" value="1"/>
</dbReference>
<dbReference type="Pfam" id="PF01782">
    <property type="entry name" value="RimM"/>
    <property type="match status" value="1"/>
</dbReference>
<dbReference type="SUPFAM" id="SSF50346">
    <property type="entry name" value="PRC-barrel domain"/>
    <property type="match status" value="1"/>
</dbReference>
<dbReference type="SUPFAM" id="SSF50447">
    <property type="entry name" value="Translation proteins"/>
    <property type="match status" value="1"/>
</dbReference>
<sequence>MEVEVGQIVNTHGIKGEVKVKSNSDFTETRFQPGEQLLVKHNNTEIVYTVASYRIHKGFHMLRFEGINNINEIEHLKGDYIYQERDHQDIELGEHEYYYSDIIGCTVFKDDDTPIGRVINIFETGANDVWVVKGEKEYLIPYIEDVVKDIDIETKTIKITPMEGLLD</sequence>
<accession>Q8CPH7</accession>